<proteinExistence type="inferred from homology"/>
<name>RS7_BORBR</name>
<comment type="function">
    <text evidence="1">One of the primary rRNA binding proteins, it binds directly to 16S rRNA where it nucleates assembly of the head domain of the 30S subunit. Is located at the subunit interface close to the decoding center, probably blocks exit of the E-site tRNA.</text>
</comment>
<comment type="subunit">
    <text evidence="1">Part of the 30S ribosomal subunit. Contacts proteins S9 and S11.</text>
</comment>
<comment type="similarity">
    <text evidence="1">Belongs to the universal ribosomal protein uS7 family.</text>
</comment>
<evidence type="ECO:0000255" key="1">
    <source>
        <dbReference type="HAMAP-Rule" id="MF_00480"/>
    </source>
</evidence>
<evidence type="ECO:0000305" key="2"/>
<dbReference type="EMBL" id="BX640437">
    <property type="protein sequence ID" value="CAE30527.1"/>
    <property type="molecule type" value="Genomic_DNA"/>
</dbReference>
<dbReference type="RefSeq" id="WP_003806901.1">
    <property type="nucleotide sequence ID" value="NC_002927.3"/>
</dbReference>
<dbReference type="SMR" id="Q7WRC8"/>
<dbReference type="GeneID" id="93206254"/>
<dbReference type="KEGG" id="bbr:BB0025"/>
<dbReference type="eggNOG" id="COG0049">
    <property type="taxonomic scope" value="Bacteria"/>
</dbReference>
<dbReference type="HOGENOM" id="CLU_072226_1_1_4"/>
<dbReference type="Proteomes" id="UP000001027">
    <property type="component" value="Chromosome"/>
</dbReference>
<dbReference type="GO" id="GO:0015935">
    <property type="term" value="C:small ribosomal subunit"/>
    <property type="evidence" value="ECO:0007669"/>
    <property type="project" value="InterPro"/>
</dbReference>
<dbReference type="GO" id="GO:0019843">
    <property type="term" value="F:rRNA binding"/>
    <property type="evidence" value="ECO:0007669"/>
    <property type="project" value="UniProtKB-UniRule"/>
</dbReference>
<dbReference type="GO" id="GO:0003735">
    <property type="term" value="F:structural constituent of ribosome"/>
    <property type="evidence" value="ECO:0007669"/>
    <property type="project" value="InterPro"/>
</dbReference>
<dbReference type="GO" id="GO:0000049">
    <property type="term" value="F:tRNA binding"/>
    <property type="evidence" value="ECO:0007669"/>
    <property type="project" value="UniProtKB-UniRule"/>
</dbReference>
<dbReference type="GO" id="GO:0006412">
    <property type="term" value="P:translation"/>
    <property type="evidence" value="ECO:0007669"/>
    <property type="project" value="UniProtKB-UniRule"/>
</dbReference>
<dbReference type="CDD" id="cd14869">
    <property type="entry name" value="uS7_Bacteria"/>
    <property type="match status" value="1"/>
</dbReference>
<dbReference type="FunFam" id="1.10.455.10:FF:000001">
    <property type="entry name" value="30S ribosomal protein S7"/>
    <property type="match status" value="1"/>
</dbReference>
<dbReference type="Gene3D" id="1.10.455.10">
    <property type="entry name" value="Ribosomal protein S7 domain"/>
    <property type="match status" value="1"/>
</dbReference>
<dbReference type="HAMAP" id="MF_00480_B">
    <property type="entry name" value="Ribosomal_uS7_B"/>
    <property type="match status" value="1"/>
</dbReference>
<dbReference type="InterPro" id="IPR000235">
    <property type="entry name" value="Ribosomal_uS7"/>
</dbReference>
<dbReference type="InterPro" id="IPR005717">
    <property type="entry name" value="Ribosomal_uS7_bac/org-type"/>
</dbReference>
<dbReference type="InterPro" id="IPR020606">
    <property type="entry name" value="Ribosomal_uS7_CS"/>
</dbReference>
<dbReference type="InterPro" id="IPR023798">
    <property type="entry name" value="Ribosomal_uS7_dom"/>
</dbReference>
<dbReference type="InterPro" id="IPR036823">
    <property type="entry name" value="Ribosomal_uS7_dom_sf"/>
</dbReference>
<dbReference type="NCBIfam" id="TIGR01029">
    <property type="entry name" value="rpsG_bact"/>
    <property type="match status" value="1"/>
</dbReference>
<dbReference type="PANTHER" id="PTHR11205">
    <property type="entry name" value="RIBOSOMAL PROTEIN S7"/>
    <property type="match status" value="1"/>
</dbReference>
<dbReference type="Pfam" id="PF00177">
    <property type="entry name" value="Ribosomal_S7"/>
    <property type="match status" value="1"/>
</dbReference>
<dbReference type="PIRSF" id="PIRSF002122">
    <property type="entry name" value="RPS7p_RPS7a_RPS5e_RPS7o"/>
    <property type="match status" value="1"/>
</dbReference>
<dbReference type="SUPFAM" id="SSF47973">
    <property type="entry name" value="Ribosomal protein S7"/>
    <property type="match status" value="1"/>
</dbReference>
<dbReference type="PROSITE" id="PS00052">
    <property type="entry name" value="RIBOSOMAL_S7"/>
    <property type="match status" value="1"/>
</dbReference>
<keyword id="KW-0687">Ribonucleoprotein</keyword>
<keyword id="KW-0689">Ribosomal protein</keyword>
<keyword id="KW-0694">RNA-binding</keyword>
<keyword id="KW-0699">rRNA-binding</keyword>
<keyword id="KW-0820">tRNA-binding</keyword>
<feature type="chain" id="PRO_0000124225" description="Small ribosomal subunit protein uS7">
    <location>
        <begin position="1"/>
        <end position="156"/>
    </location>
</feature>
<sequence length="156" mass="17723">MPRRREVPKREILPDPKFGSVELAKFMNVVMLDGKKAVAERIIYGALEQVQVKTGKDAIEVFNLAINNIKPIVEVKSRRVGGANYQVPVEVRPVRRLALAMRWLREAAKKRGEKSMDLRLAGELIDASEGRGAAMKKREDTHKMAEANKAFSHFRW</sequence>
<gene>
    <name evidence="1" type="primary">rpsG</name>
    <name type="ordered locus">BB0025</name>
</gene>
<organism>
    <name type="scientific">Bordetella bronchiseptica (strain ATCC BAA-588 / NCTC 13252 / RB50)</name>
    <name type="common">Alcaligenes bronchisepticus</name>
    <dbReference type="NCBI Taxonomy" id="257310"/>
    <lineage>
        <taxon>Bacteria</taxon>
        <taxon>Pseudomonadati</taxon>
        <taxon>Pseudomonadota</taxon>
        <taxon>Betaproteobacteria</taxon>
        <taxon>Burkholderiales</taxon>
        <taxon>Alcaligenaceae</taxon>
        <taxon>Bordetella</taxon>
    </lineage>
</organism>
<accession>Q7WRC8</accession>
<reference key="1">
    <citation type="journal article" date="2003" name="Nat. Genet.">
        <title>Comparative analysis of the genome sequences of Bordetella pertussis, Bordetella parapertussis and Bordetella bronchiseptica.</title>
        <authorList>
            <person name="Parkhill J."/>
            <person name="Sebaihia M."/>
            <person name="Preston A."/>
            <person name="Murphy L.D."/>
            <person name="Thomson N.R."/>
            <person name="Harris D.E."/>
            <person name="Holden M.T.G."/>
            <person name="Churcher C.M."/>
            <person name="Bentley S.D."/>
            <person name="Mungall K.L."/>
            <person name="Cerdeno-Tarraga A.-M."/>
            <person name="Temple L."/>
            <person name="James K.D."/>
            <person name="Harris B."/>
            <person name="Quail M.A."/>
            <person name="Achtman M."/>
            <person name="Atkin R."/>
            <person name="Baker S."/>
            <person name="Basham D."/>
            <person name="Bason N."/>
            <person name="Cherevach I."/>
            <person name="Chillingworth T."/>
            <person name="Collins M."/>
            <person name="Cronin A."/>
            <person name="Davis P."/>
            <person name="Doggett J."/>
            <person name="Feltwell T."/>
            <person name="Goble A."/>
            <person name="Hamlin N."/>
            <person name="Hauser H."/>
            <person name="Holroyd S."/>
            <person name="Jagels K."/>
            <person name="Leather S."/>
            <person name="Moule S."/>
            <person name="Norberczak H."/>
            <person name="O'Neil S."/>
            <person name="Ormond D."/>
            <person name="Price C."/>
            <person name="Rabbinowitsch E."/>
            <person name="Rutter S."/>
            <person name="Sanders M."/>
            <person name="Saunders D."/>
            <person name="Seeger K."/>
            <person name="Sharp S."/>
            <person name="Simmonds M."/>
            <person name="Skelton J."/>
            <person name="Squares R."/>
            <person name="Squares S."/>
            <person name="Stevens K."/>
            <person name="Unwin L."/>
            <person name="Whitehead S."/>
            <person name="Barrell B.G."/>
            <person name="Maskell D.J."/>
        </authorList>
    </citation>
    <scope>NUCLEOTIDE SEQUENCE [LARGE SCALE GENOMIC DNA]</scope>
    <source>
        <strain>ATCC BAA-588 / NCTC 13252 / RB50</strain>
    </source>
</reference>
<protein>
    <recommendedName>
        <fullName evidence="1">Small ribosomal subunit protein uS7</fullName>
    </recommendedName>
    <alternativeName>
        <fullName evidence="2">30S ribosomal protein S7</fullName>
    </alternativeName>
</protein>